<comment type="function">
    <text evidence="1">Extracellular dipeptidyl-peptidase which removes N-terminal dipeptides sequentially from polypeptides having unsubstituted N-termini.</text>
</comment>
<comment type="subcellular location">
    <subcellularLocation>
        <location evidence="1">Secreted</location>
    </subcellularLocation>
</comment>
<comment type="similarity">
    <text evidence="3">Belongs to the peptidase S9C family.</text>
</comment>
<gene>
    <name type="primary">dpp5</name>
</gene>
<name>DPP5_ASPNG</name>
<evidence type="ECO:0000250" key="1"/>
<evidence type="ECO:0000255" key="2"/>
<evidence type="ECO:0000305" key="3"/>
<accession>Q3LS63</accession>
<sequence>MGALQWLSITAAAASAVSALTPEQMIGAPRRTEVIPNPSGDTGLFSTSQWSFDTHSESTWWSLIDLESGETTTLTDDSDIEEIIWLGSDSSTLLYINSTNAQVPGGVELWIADSSDFANYKAASLSAGFLGIKSTVTDSGDVHFILRGKSYPNGTAYNDQLAETYPSTARIYDSIFVRHWDTYLTTASHAVFSGTLQSSTSDDGNVQYTSSGGLTNLVNPVKGAESPFPPFGGNDDYDLSPDGKWVTFKSKAPELPLANNTAAYVYLVPHDGSATAFAVNGPDSPATPEGVEGESNNPVFSPDSDKIAYFQMATNTYESDRNVLYVYSIADDTITPLAKDWDRSPSSVTWVDGDNLVVASQDLGRTRLFAIPGDAGTTSSPRTFTDGGSVSAQYVLSNSTLLVTSSAFWTSWSVYTASPDEGVINTLASANEIDPELSGLSSSDFEEFYFDGNWTTLQGWITYPQDFDSSKKYPLAFLIHGGPEDAWADEWNLKWHSKVFADQGYVVVQPNPTGSTGFGQQLTDAIQLNWTAGAAYDDLTKAWQYVHDTYDFIDTDNGVAAGPSFGAFMITWIQGDDFGRKFKALVSHDGPFIGDAWVETDELWFVEHEFNGTFWQARDAFHNTDPSGPSRVLAYSTPQLVIHSDKDYRIPVANGIGLFNTLQERGVPSRFLNFPDEDHWVTGQENSLVWYQQVLGWINRYSGVGGSNPDAIALEDTVNPVVDLNP</sequence>
<reference key="1">
    <citation type="submission" date="2005-08" db="EMBL/GenBank/DDBJ databases">
        <title>Improvement of foreign protein production by disruption of the DppIV and DppV genes in aspergillus niger.</title>
        <authorList>
            <person name="Xue W."/>
            <person name="Zhao Y."/>
            <person name="Wang Y."/>
            <person name="Wang A."/>
            <person name="Tang G."/>
            <person name="Zhao W."/>
            <person name="Qin J."/>
            <person name="Sims A.H."/>
            <person name="Wang H."/>
        </authorList>
    </citation>
    <scope>NUCLEOTIDE SEQUENCE [LARGE SCALE GENOMIC DNA]</scope>
</reference>
<organism>
    <name type="scientific">Aspergillus niger</name>
    <dbReference type="NCBI Taxonomy" id="5061"/>
    <lineage>
        <taxon>Eukaryota</taxon>
        <taxon>Fungi</taxon>
        <taxon>Dikarya</taxon>
        <taxon>Ascomycota</taxon>
        <taxon>Pezizomycotina</taxon>
        <taxon>Eurotiomycetes</taxon>
        <taxon>Eurotiomycetidae</taxon>
        <taxon>Eurotiales</taxon>
        <taxon>Aspergillaceae</taxon>
        <taxon>Aspergillus</taxon>
        <taxon>Aspergillus subgen. Circumdati</taxon>
    </lineage>
</organism>
<proteinExistence type="inferred from homology"/>
<feature type="signal peptide" evidence="2">
    <location>
        <begin position="1"/>
        <end position="19"/>
    </location>
</feature>
<feature type="chain" id="PRO_0000397819" description="Probable dipeptidyl-peptidase 5">
    <location>
        <begin position="20"/>
        <end position="726"/>
    </location>
</feature>
<feature type="active site" description="Charge relay system" evidence="1">
    <location>
        <position position="564"/>
    </location>
</feature>
<feature type="active site" description="Charge relay system" evidence="1">
    <location>
        <position position="647"/>
    </location>
</feature>
<feature type="active site" description="Charge relay system" evidence="1">
    <location>
        <position position="679"/>
    </location>
</feature>
<feature type="glycosylation site" description="N-linked (GlcNAc...) asparagine" evidence="2">
    <location>
        <position position="97"/>
    </location>
</feature>
<feature type="glycosylation site" description="N-linked (GlcNAc...) asparagine" evidence="2">
    <location>
        <position position="153"/>
    </location>
</feature>
<feature type="glycosylation site" description="N-linked (GlcNAc...) asparagine" evidence="2">
    <location>
        <position position="259"/>
    </location>
</feature>
<feature type="glycosylation site" description="N-linked (GlcNAc...) asparagine" evidence="2">
    <location>
        <position position="398"/>
    </location>
</feature>
<feature type="glycosylation site" description="N-linked (GlcNAc...) asparagine" evidence="2">
    <location>
        <position position="453"/>
    </location>
</feature>
<feature type="glycosylation site" description="N-linked (GlcNAc...) asparagine" evidence="2">
    <location>
        <position position="529"/>
    </location>
</feature>
<feature type="glycosylation site" description="N-linked (GlcNAc...) asparagine" evidence="2">
    <location>
        <position position="611"/>
    </location>
</feature>
<keyword id="KW-0031">Aminopeptidase</keyword>
<keyword id="KW-0325">Glycoprotein</keyword>
<keyword id="KW-0378">Hydrolase</keyword>
<keyword id="KW-0645">Protease</keyword>
<keyword id="KW-0964">Secreted</keyword>
<keyword id="KW-0720">Serine protease</keyword>
<keyword id="KW-0732">Signal</keyword>
<protein>
    <recommendedName>
        <fullName>Probable dipeptidyl-peptidase 5</fullName>
        <ecNumber>3.4.14.-</ecNumber>
    </recommendedName>
    <alternativeName>
        <fullName>Dipeptidyl-peptidase V</fullName>
        <shortName>DPP V</shortName>
        <shortName>DppV</shortName>
    </alternativeName>
</protein>
<dbReference type="EC" id="3.4.14.-"/>
<dbReference type="EMBL" id="DQ184681">
    <property type="protein sequence ID" value="ABA26932.1"/>
    <property type="molecule type" value="Genomic_DNA"/>
</dbReference>
<dbReference type="SMR" id="Q3LS63"/>
<dbReference type="ESTHER" id="aspng-DPP5">
    <property type="family name" value="Prolyl_oligopeptidase_S9"/>
</dbReference>
<dbReference type="MEROPS" id="S09.012"/>
<dbReference type="GlyCosmos" id="Q3LS63">
    <property type="glycosylation" value="7 sites, No reported glycans"/>
</dbReference>
<dbReference type="PaxDb" id="5061-CADANGAP00009722"/>
<dbReference type="VEuPathDB" id="FungiDB:An12g04700"/>
<dbReference type="VEuPathDB" id="FungiDB:ASPNIDRAFT2_1150584"/>
<dbReference type="VEuPathDB" id="FungiDB:ATCC64974_37520"/>
<dbReference type="VEuPathDB" id="FungiDB:M747DRAFT_265385"/>
<dbReference type="eggNOG" id="KOG2100">
    <property type="taxonomic scope" value="Eukaryota"/>
</dbReference>
<dbReference type="GO" id="GO:0005576">
    <property type="term" value="C:extracellular region"/>
    <property type="evidence" value="ECO:0007669"/>
    <property type="project" value="UniProtKB-SubCell"/>
</dbReference>
<dbReference type="GO" id="GO:0004177">
    <property type="term" value="F:aminopeptidase activity"/>
    <property type="evidence" value="ECO:0007669"/>
    <property type="project" value="UniProtKB-KW"/>
</dbReference>
<dbReference type="GO" id="GO:0004252">
    <property type="term" value="F:serine-type endopeptidase activity"/>
    <property type="evidence" value="ECO:0007669"/>
    <property type="project" value="TreeGrafter"/>
</dbReference>
<dbReference type="GO" id="GO:0006508">
    <property type="term" value="P:proteolysis"/>
    <property type="evidence" value="ECO:0007669"/>
    <property type="project" value="UniProtKB-KW"/>
</dbReference>
<dbReference type="FunFam" id="3.40.50.1820:FF:000028">
    <property type="entry name" value="S9 family peptidase"/>
    <property type="match status" value="1"/>
</dbReference>
<dbReference type="Gene3D" id="3.40.50.1820">
    <property type="entry name" value="alpha/beta hydrolase"/>
    <property type="match status" value="1"/>
</dbReference>
<dbReference type="Gene3D" id="2.120.10.30">
    <property type="entry name" value="TolB, C-terminal domain"/>
    <property type="match status" value="1"/>
</dbReference>
<dbReference type="InterPro" id="IPR011042">
    <property type="entry name" value="6-blade_b-propeller_TolB-like"/>
</dbReference>
<dbReference type="InterPro" id="IPR029058">
    <property type="entry name" value="AB_hydrolase_fold"/>
</dbReference>
<dbReference type="InterPro" id="IPR001375">
    <property type="entry name" value="Peptidase_S9_cat"/>
</dbReference>
<dbReference type="PANTHER" id="PTHR42776:SF11">
    <property type="entry name" value="DIPEPTIDYL-PEPTIDASE 5-RELATED"/>
    <property type="match status" value="1"/>
</dbReference>
<dbReference type="PANTHER" id="PTHR42776">
    <property type="entry name" value="SERINE PEPTIDASE S9 FAMILY MEMBER"/>
    <property type="match status" value="1"/>
</dbReference>
<dbReference type="Pfam" id="PF00326">
    <property type="entry name" value="Peptidase_S9"/>
    <property type="match status" value="1"/>
</dbReference>
<dbReference type="SUPFAM" id="SSF53474">
    <property type="entry name" value="alpha/beta-Hydrolases"/>
    <property type="match status" value="1"/>
</dbReference>
<dbReference type="SUPFAM" id="SSF82171">
    <property type="entry name" value="DPP6 N-terminal domain-like"/>
    <property type="match status" value="1"/>
</dbReference>